<comment type="function">
    <text evidence="1">Catalyzes the transfer of a dimethylallyl group onto the adenine at position 37 in tRNAs that read codons beginning with uridine, leading to the formation of N6-(dimethylallyl)adenosine (i(6)A).</text>
</comment>
<comment type="catalytic activity">
    <reaction evidence="1">
        <text>adenosine(37) in tRNA + dimethylallyl diphosphate = N(6)-dimethylallyladenosine(37) in tRNA + diphosphate</text>
        <dbReference type="Rhea" id="RHEA:26482"/>
        <dbReference type="Rhea" id="RHEA-COMP:10162"/>
        <dbReference type="Rhea" id="RHEA-COMP:10375"/>
        <dbReference type="ChEBI" id="CHEBI:33019"/>
        <dbReference type="ChEBI" id="CHEBI:57623"/>
        <dbReference type="ChEBI" id="CHEBI:74411"/>
        <dbReference type="ChEBI" id="CHEBI:74415"/>
        <dbReference type="EC" id="2.5.1.75"/>
    </reaction>
</comment>
<comment type="cofactor">
    <cofactor evidence="1">
        <name>Mg(2+)</name>
        <dbReference type="ChEBI" id="CHEBI:18420"/>
    </cofactor>
</comment>
<comment type="subunit">
    <text evidence="1">Monomer.</text>
</comment>
<comment type="similarity">
    <text evidence="1">Belongs to the IPP transferase family.</text>
</comment>
<proteinExistence type="inferred from homology"/>
<feature type="chain" id="PRO_0000163910" description="tRNA dimethylallyltransferase">
    <location>
        <begin position="1"/>
        <end position="306"/>
    </location>
</feature>
<feature type="binding site" evidence="1">
    <location>
        <begin position="11"/>
        <end position="18"/>
    </location>
    <ligand>
        <name>ATP</name>
        <dbReference type="ChEBI" id="CHEBI:30616"/>
    </ligand>
</feature>
<feature type="binding site" evidence="1">
    <location>
        <begin position="13"/>
        <end position="18"/>
    </location>
    <ligand>
        <name>substrate</name>
    </ligand>
</feature>
<feature type="site" description="Interaction with substrate tRNA" evidence="1">
    <location>
        <position position="102"/>
    </location>
</feature>
<feature type="site" description="Interaction with substrate tRNA" evidence="1">
    <location>
        <position position="124"/>
    </location>
</feature>
<protein>
    <recommendedName>
        <fullName evidence="1">tRNA dimethylallyltransferase</fullName>
        <ecNumber evidence="1">2.5.1.75</ecNumber>
    </recommendedName>
    <alternativeName>
        <fullName evidence="1">Dimethylallyl diphosphate:tRNA dimethylallyltransferase</fullName>
        <shortName evidence="1">DMAPP:tRNA dimethylallyltransferase</shortName>
        <shortName evidence="1">DMATase</shortName>
    </alternativeName>
    <alternativeName>
        <fullName evidence="1">Isopentenyl-diphosphate:tRNA isopentenyltransferase</fullName>
        <shortName evidence="1">IPP transferase</shortName>
        <shortName evidence="1">IPPT</shortName>
        <shortName evidence="1">IPTase</shortName>
    </alternativeName>
</protein>
<sequence>MAAPLIPVLTAPTAAGKTALALRLAREYGLEIVAADAFTVYRGLDLGTAKPTPQERASVPHHLLDVVDVTQSYDVAQYAAQAEAAIVDILARGRLPLVVGGTGFYLSALSRGLPLTPPSDPKMRAALEAELQERGLDALLAEIEQANPAEAARMERNPRRVVRALEVYRAAGRFPGEFGYSPPAFQYQVFAFSPPAAEMEQRVQERTAAMLRAGWPQEAQWLAGQVPPEQEPRPTVWQALGYAEALAVAQGRLSLAGAEQAIALATRQYGKRQLTWMRRQLGAEVQSPDAAEAHLRAFLERSGAPS</sequence>
<keyword id="KW-0067">ATP-binding</keyword>
<keyword id="KW-0460">Magnesium</keyword>
<keyword id="KW-0547">Nucleotide-binding</keyword>
<keyword id="KW-1185">Reference proteome</keyword>
<keyword id="KW-0808">Transferase</keyword>
<keyword id="KW-0819">tRNA processing</keyword>
<gene>
    <name evidence="1" type="primary">miaA</name>
    <name type="ordered locus">DR_1690</name>
</gene>
<name>MIAA_DEIRA</name>
<evidence type="ECO:0000255" key="1">
    <source>
        <dbReference type="HAMAP-Rule" id="MF_00185"/>
    </source>
</evidence>
<reference key="1">
    <citation type="journal article" date="1999" name="Science">
        <title>Genome sequence of the radioresistant bacterium Deinococcus radiodurans R1.</title>
        <authorList>
            <person name="White O."/>
            <person name="Eisen J.A."/>
            <person name="Heidelberg J.F."/>
            <person name="Hickey E.K."/>
            <person name="Peterson J.D."/>
            <person name="Dodson R.J."/>
            <person name="Haft D.H."/>
            <person name="Gwinn M.L."/>
            <person name="Nelson W.C."/>
            <person name="Richardson D.L."/>
            <person name="Moffat K.S."/>
            <person name="Qin H."/>
            <person name="Jiang L."/>
            <person name="Pamphile W."/>
            <person name="Crosby M."/>
            <person name="Shen M."/>
            <person name="Vamathevan J.J."/>
            <person name="Lam P."/>
            <person name="McDonald L.A."/>
            <person name="Utterback T.R."/>
            <person name="Zalewski C."/>
            <person name="Makarova K.S."/>
            <person name="Aravind L."/>
            <person name="Daly M.J."/>
            <person name="Minton K.W."/>
            <person name="Fleischmann R.D."/>
            <person name="Ketchum K.A."/>
            <person name="Nelson K.E."/>
            <person name="Salzberg S.L."/>
            <person name="Smith H.O."/>
            <person name="Venter J.C."/>
            <person name="Fraser C.M."/>
        </authorList>
    </citation>
    <scope>NUCLEOTIDE SEQUENCE [LARGE SCALE GENOMIC DNA]</scope>
    <source>
        <strain>ATCC 13939 / DSM 20539 / JCM 16871 / CCUG 27074 / LMG 4051 / NBRC 15346 / NCIMB 9279 / VKM B-1422 / R1</strain>
    </source>
</reference>
<accession>Q9RTR6</accession>
<dbReference type="EC" id="2.5.1.75" evidence="1"/>
<dbReference type="EMBL" id="AE000513">
    <property type="protein sequence ID" value="AAF11245.1"/>
    <property type="molecule type" value="Genomic_DNA"/>
</dbReference>
<dbReference type="PIR" id="H75366">
    <property type="entry name" value="H75366"/>
</dbReference>
<dbReference type="RefSeq" id="NP_295413.1">
    <property type="nucleotide sequence ID" value="NC_001263.1"/>
</dbReference>
<dbReference type="RefSeq" id="WP_010888325.1">
    <property type="nucleotide sequence ID" value="NC_001263.1"/>
</dbReference>
<dbReference type="SMR" id="Q9RTR6"/>
<dbReference type="FunCoup" id="Q9RTR6">
    <property type="interactions" value="463"/>
</dbReference>
<dbReference type="STRING" id="243230.DR_1690"/>
<dbReference type="PaxDb" id="243230-DR_1690"/>
<dbReference type="EnsemblBacteria" id="AAF11245">
    <property type="protein sequence ID" value="AAF11245"/>
    <property type="gene ID" value="DR_1690"/>
</dbReference>
<dbReference type="GeneID" id="69517926"/>
<dbReference type="KEGG" id="dra:DR_1690"/>
<dbReference type="PATRIC" id="fig|243230.17.peg.1900"/>
<dbReference type="eggNOG" id="COG0324">
    <property type="taxonomic scope" value="Bacteria"/>
</dbReference>
<dbReference type="HOGENOM" id="CLU_032616_0_0_0"/>
<dbReference type="InParanoid" id="Q9RTR6"/>
<dbReference type="OrthoDB" id="9776390at2"/>
<dbReference type="Proteomes" id="UP000002524">
    <property type="component" value="Chromosome 1"/>
</dbReference>
<dbReference type="GO" id="GO:0005524">
    <property type="term" value="F:ATP binding"/>
    <property type="evidence" value="ECO:0007669"/>
    <property type="project" value="UniProtKB-UniRule"/>
</dbReference>
<dbReference type="GO" id="GO:0052381">
    <property type="term" value="F:tRNA dimethylallyltransferase activity"/>
    <property type="evidence" value="ECO:0000318"/>
    <property type="project" value="GO_Central"/>
</dbReference>
<dbReference type="GO" id="GO:0006400">
    <property type="term" value="P:tRNA modification"/>
    <property type="evidence" value="ECO:0000318"/>
    <property type="project" value="GO_Central"/>
</dbReference>
<dbReference type="Gene3D" id="1.10.20.140">
    <property type="match status" value="1"/>
</dbReference>
<dbReference type="Gene3D" id="3.40.50.300">
    <property type="entry name" value="P-loop containing nucleotide triphosphate hydrolases"/>
    <property type="match status" value="1"/>
</dbReference>
<dbReference type="HAMAP" id="MF_00185">
    <property type="entry name" value="IPP_trans"/>
    <property type="match status" value="1"/>
</dbReference>
<dbReference type="InterPro" id="IPR039657">
    <property type="entry name" value="Dimethylallyltransferase"/>
</dbReference>
<dbReference type="InterPro" id="IPR018022">
    <property type="entry name" value="IPT"/>
</dbReference>
<dbReference type="InterPro" id="IPR027417">
    <property type="entry name" value="P-loop_NTPase"/>
</dbReference>
<dbReference type="NCBIfam" id="TIGR00174">
    <property type="entry name" value="miaA"/>
    <property type="match status" value="1"/>
</dbReference>
<dbReference type="PANTHER" id="PTHR11088">
    <property type="entry name" value="TRNA DIMETHYLALLYLTRANSFERASE"/>
    <property type="match status" value="1"/>
</dbReference>
<dbReference type="PANTHER" id="PTHR11088:SF60">
    <property type="entry name" value="TRNA DIMETHYLALLYLTRANSFERASE"/>
    <property type="match status" value="1"/>
</dbReference>
<dbReference type="Pfam" id="PF01715">
    <property type="entry name" value="IPPT"/>
    <property type="match status" value="1"/>
</dbReference>
<dbReference type="SUPFAM" id="SSF52540">
    <property type="entry name" value="P-loop containing nucleoside triphosphate hydrolases"/>
    <property type="match status" value="1"/>
</dbReference>
<organism>
    <name type="scientific">Deinococcus radiodurans (strain ATCC 13939 / DSM 20539 / JCM 16871 / CCUG 27074 / LMG 4051 / NBRC 15346 / NCIMB 9279 / VKM B-1422 / R1)</name>
    <dbReference type="NCBI Taxonomy" id="243230"/>
    <lineage>
        <taxon>Bacteria</taxon>
        <taxon>Thermotogati</taxon>
        <taxon>Deinococcota</taxon>
        <taxon>Deinococci</taxon>
        <taxon>Deinococcales</taxon>
        <taxon>Deinococcaceae</taxon>
        <taxon>Deinococcus</taxon>
    </lineage>
</organism>